<evidence type="ECO:0000250" key="1">
    <source>
        <dbReference type="UniProtKB" id="Q62007"/>
    </source>
</evidence>
<evidence type="ECO:0000255" key="2"/>
<evidence type="ECO:0000255" key="3">
    <source>
        <dbReference type="PROSITE-ProRule" id="PRU00521"/>
    </source>
</evidence>
<evidence type="ECO:0000269" key="4">
    <source>
    </source>
</evidence>
<evidence type="ECO:0000269" key="5">
    <source>
    </source>
</evidence>
<evidence type="ECO:0000305" key="6"/>
<evidence type="ECO:0000312" key="7">
    <source>
        <dbReference type="HGNC" id="HGNC:14993"/>
    </source>
</evidence>
<proteinExistence type="evidence at protein level"/>
<protein>
    <recommendedName>
        <fullName evidence="6">Olfactory receptor 10J5</fullName>
    </recommendedName>
    <alternativeName>
        <fullName>Olfactory receptor OR1-28</fullName>
    </alternativeName>
</protein>
<gene>
    <name evidence="7" type="primary">OR10J5</name>
</gene>
<name>O10J5_HUMAN</name>
<reference key="1">
    <citation type="submission" date="2001-07" db="EMBL/GenBank/DDBJ databases">
        <title>Genome-wide discovery and analysis of human seven transmembrane helix receptor genes.</title>
        <authorList>
            <person name="Suwa M."/>
            <person name="Sato T."/>
            <person name="Okouchi I."/>
            <person name="Arita M."/>
            <person name="Futami K."/>
            <person name="Matsumoto S."/>
            <person name="Tsutsumi S."/>
            <person name="Aburatani H."/>
            <person name="Asai K."/>
            <person name="Akiyama Y."/>
        </authorList>
    </citation>
    <scope>NUCLEOTIDE SEQUENCE [GENOMIC DNA]</scope>
</reference>
<reference key="2">
    <citation type="journal article" date="2006" name="Nature">
        <title>The DNA sequence and biological annotation of human chromosome 1.</title>
        <authorList>
            <person name="Gregory S.G."/>
            <person name="Barlow K.F."/>
            <person name="McLay K.E."/>
            <person name="Kaul R."/>
            <person name="Swarbreck D."/>
            <person name="Dunham A."/>
            <person name="Scott C.E."/>
            <person name="Howe K.L."/>
            <person name="Woodfine K."/>
            <person name="Spencer C.C.A."/>
            <person name="Jones M.C."/>
            <person name="Gillson C."/>
            <person name="Searle S."/>
            <person name="Zhou Y."/>
            <person name="Kokocinski F."/>
            <person name="McDonald L."/>
            <person name="Evans R."/>
            <person name="Phillips K."/>
            <person name="Atkinson A."/>
            <person name="Cooper R."/>
            <person name="Jones C."/>
            <person name="Hall R.E."/>
            <person name="Andrews T.D."/>
            <person name="Lloyd C."/>
            <person name="Ainscough R."/>
            <person name="Almeida J.P."/>
            <person name="Ambrose K.D."/>
            <person name="Anderson F."/>
            <person name="Andrew R.W."/>
            <person name="Ashwell R.I.S."/>
            <person name="Aubin K."/>
            <person name="Babbage A.K."/>
            <person name="Bagguley C.L."/>
            <person name="Bailey J."/>
            <person name="Beasley H."/>
            <person name="Bethel G."/>
            <person name="Bird C.P."/>
            <person name="Bray-Allen S."/>
            <person name="Brown J.Y."/>
            <person name="Brown A.J."/>
            <person name="Buckley D."/>
            <person name="Burton J."/>
            <person name="Bye J."/>
            <person name="Carder C."/>
            <person name="Chapman J.C."/>
            <person name="Clark S.Y."/>
            <person name="Clarke G."/>
            <person name="Clee C."/>
            <person name="Cobley V."/>
            <person name="Collier R.E."/>
            <person name="Corby N."/>
            <person name="Coville G.J."/>
            <person name="Davies J."/>
            <person name="Deadman R."/>
            <person name="Dunn M."/>
            <person name="Earthrowl M."/>
            <person name="Ellington A.G."/>
            <person name="Errington H."/>
            <person name="Frankish A."/>
            <person name="Frankland J."/>
            <person name="French L."/>
            <person name="Garner P."/>
            <person name="Garnett J."/>
            <person name="Gay L."/>
            <person name="Ghori M.R.J."/>
            <person name="Gibson R."/>
            <person name="Gilby L.M."/>
            <person name="Gillett W."/>
            <person name="Glithero R.J."/>
            <person name="Grafham D.V."/>
            <person name="Griffiths C."/>
            <person name="Griffiths-Jones S."/>
            <person name="Grocock R."/>
            <person name="Hammond S."/>
            <person name="Harrison E.S.I."/>
            <person name="Hart E."/>
            <person name="Haugen E."/>
            <person name="Heath P.D."/>
            <person name="Holmes S."/>
            <person name="Holt K."/>
            <person name="Howden P.J."/>
            <person name="Hunt A.R."/>
            <person name="Hunt S.E."/>
            <person name="Hunter G."/>
            <person name="Isherwood J."/>
            <person name="James R."/>
            <person name="Johnson C."/>
            <person name="Johnson D."/>
            <person name="Joy A."/>
            <person name="Kay M."/>
            <person name="Kershaw J.K."/>
            <person name="Kibukawa M."/>
            <person name="Kimberley A.M."/>
            <person name="King A."/>
            <person name="Knights A.J."/>
            <person name="Lad H."/>
            <person name="Laird G."/>
            <person name="Lawlor S."/>
            <person name="Leongamornlert D.A."/>
            <person name="Lloyd D.M."/>
            <person name="Loveland J."/>
            <person name="Lovell J."/>
            <person name="Lush M.J."/>
            <person name="Lyne R."/>
            <person name="Martin S."/>
            <person name="Mashreghi-Mohammadi M."/>
            <person name="Matthews L."/>
            <person name="Matthews N.S.W."/>
            <person name="McLaren S."/>
            <person name="Milne S."/>
            <person name="Mistry S."/>
            <person name="Moore M.J.F."/>
            <person name="Nickerson T."/>
            <person name="O'Dell C.N."/>
            <person name="Oliver K."/>
            <person name="Palmeiri A."/>
            <person name="Palmer S.A."/>
            <person name="Parker A."/>
            <person name="Patel D."/>
            <person name="Pearce A.V."/>
            <person name="Peck A.I."/>
            <person name="Pelan S."/>
            <person name="Phelps K."/>
            <person name="Phillimore B.J."/>
            <person name="Plumb R."/>
            <person name="Rajan J."/>
            <person name="Raymond C."/>
            <person name="Rouse G."/>
            <person name="Saenphimmachak C."/>
            <person name="Sehra H.K."/>
            <person name="Sheridan E."/>
            <person name="Shownkeen R."/>
            <person name="Sims S."/>
            <person name="Skuce C.D."/>
            <person name="Smith M."/>
            <person name="Steward C."/>
            <person name="Subramanian S."/>
            <person name="Sycamore N."/>
            <person name="Tracey A."/>
            <person name="Tromans A."/>
            <person name="Van Helmond Z."/>
            <person name="Wall M."/>
            <person name="Wallis J.M."/>
            <person name="White S."/>
            <person name="Whitehead S.L."/>
            <person name="Wilkinson J.E."/>
            <person name="Willey D.L."/>
            <person name="Williams H."/>
            <person name="Wilming L."/>
            <person name="Wray P.W."/>
            <person name="Wu Z."/>
            <person name="Coulson A."/>
            <person name="Vaudin M."/>
            <person name="Sulston J.E."/>
            <person name="Durbin R.M."/>
            <person name="Hubbard T."/>
            <person name="Wooster R."/>
            <person name="Dunham I."/>
            <person name="Carter N.P."/>
            <person name="McVean G."/>
            <person name="Ross M.T."/>
            <person name="Harrow J."/>
            <person name="Olson M.V."/>
            <person name="Beck S."/>
            <person name="Rogers J."/>
            <person name="Bentley D.R."/>
        </authorList>
    </citation>
    <scope>NUCLEOTIDE SEQUENCE [LARGE SCALE GENOMIC DNA]</scope>
</reference>
<reference key="3">
    <citation type="submission" date="2005-09" db="EMBL/GenBank/DDBJ databases">
        <authorList>
            <person name="Mural R.J."/>
            <person name="Istrail S."/>
            <person name="Sutton G.G."/>
            <person name="Florea L."/>
            <person name="Halpern A.L."/>
            <person name="Mobarry C.M."/>
            <person name="Lippert R."/>
            <person name="Walenz B."/>
            <person name="Shatkay H."/>
            <person name="Dew I."/>
            <person name="Miller J.R."/>
            <person name="Flanigan M.J."/>
            <person name="Edwards N.J."/>
            <person name="Bolanos R."/>
            <person name="Fasulo D."/>
            <person name="Halldorsson B.V."/>
            <person name="Hannenhalli S."/>
            <person name="Turner R."/>
            <person name="Yooseph S."/>
            <person name="Lu F."/>
            <person name="Nusskern D.R."/>
            <person name="Shue B.C."/>
            <person name="Zheng X.H."/>
            <person name="Zhong F."/>
            <person name="Delcher A.L."/>
            <person name="Huson D.H."/>
            <person name="Kravitz S.A."/>
            <person name="Mouchard L."/>
            <person name="Reinert K."/>
            <person name="Remington K.A."/>
            <person name="Clark A.G."/>
            <person name="Waterman M.S."/>
            <person name="Eichler E.E."/>
            <person name="Adams M.D."/>
            <person name="Hunkapiller M.W."/>
            <person name="Myers E.W."/>
            <person name="Venter J.C."/>
        </authorList>
    </citation>
    <scope>NUCLEOTIDE SEQUENCE [LARGE SCALE GENOMIC DNA]</scope>
</reference>
<reference key="4">
    <citation type="journal article" date="2004" name="Genome Res.">
        <title>The status, quality, and expansion of the NIH full-length cDNA project: the Mammalian Gene Collection (MGC).</title>
        <authorList>
            <consortium name="The MGC Project Team"/>
        </authorList>
    </citation>
    <scope>NUCLEOTIDE SEQUENCE [LARGE SCALE MRNA]</scope>
    <source>
        <tissue>Testis</tissue>
    </source>
</reference>
<reference key="5">
    <citation type="journal article" date="2004" name="Proc. Natl. Acad. Sci. U.S.A.">
        <title>The human olfactory receptor gene family.</title>
        <authorList>
            <person name="Malnic B."/>
            <person name="Godfrey P.A."/>
            <person name="Buck L.B."/>
        </authorList>
    </citation>
    <scope>IDENTIFICATION</scope>
</reference>
<reference key="6">
    <citation type="journal article" date="2004" name="Proc. Natl. Acad. Sci. U.S.A.">
        <authorList>
            <person name="Malnic B."/>
            <person name="Godfrey P.A."/>
            <person name="Buck L.B."/>
        </authorList>
    </citation>
    <scope>ERRATUM OF PUBMED:14983052</scope>
</reference>
<reference key="7">
    <citation type="journal article" date="2015" name="Biochem. Biophys. Res. Commun.">
        <title>Expression of human olfactory receptor 10J5 in heart aorta, coronary artery, and endothelial cells and its functional role in angiogenesis.</title>
        <authorList>
            <person name="Kim S.H."/>
            <person name="Yoon Y.C."/>
            <person name="Lee A.S."/>
            <person name="Kang N."/>
            <person name="Koo J."/>
            <person name="Rhyu M.R."/>
            <person name="Park J.H."/>
        </authorList>
    </citation>
    <scope>TISSUE SPECIFICITY</scope>
    <scope>FUNCTION</scope>
</reference>
<reference key="8">
    <citation type="journal article" date="2017" name="Sci. Rep.">
        <title>Olfactory receptor 10J5 responding to alpha-cedrene regulates hepatic steatosis via the cAMP-PKA pathway.</title>
        <authorList>
            <person name="Tong T."/>
            <person name="Ryu S.E."/>
            <person name="Min Y."/>
            <person name="de March C.A."/>
            <person name="Bushdid C."/>
            <person name="Golebiowski J."/>
            <person name="Moon C."/>
            <person name="Park T."/>
        </authorList>
    </citation>
    <scope>FUNCTION</scope>
    <scope>SUBCELLULAR LOCATION</scope>
</reference>
<feature type="chain" id="PRO_0000150709" description="Olfactory receptor 10J5">
    <location>
        <begin position="1"/>
        <end position="309"/>
    </location>
</feature>
<feature type="topological domain" description="Extracellular" evidence="2">
    <location>
        <begin position="1"/>
        <end position="25"/>
    </location>
</feature>
<feature type="transmembrane region" description="Helical; Name=1" evidence="2">
    <location>
        <begin position="26"/>
        <end position="46"/>
    </location>
</feature>
<feature type="topological domain" description="Cytoplasmic" evidence="2">
    <location>
        <begin position="47"/>
        <end position="54"/>
    </location>
</feature>
<feature type="transmembrane region" description="Helical; Name=2" evidence="2">
    <location>
        <begin position="55"/>
        <end position="75"/>
    </location>
</feature>
<feature type="topological domain" description="Extracellular" evidence="2">
    <location>
        <begin position="76"/>
        <end position="99"/>
    </location>
</feature>
<feature type="transmembrane region" description="Helical; Name=3" evidence="2">
    <location>
        <begin position="100"/>
        <end position="120"/>
    </location>
</feature>
<feature type="topological domain" description="Cytoplasmic" evidence="2">
    <location>
        <begin position="121"/>
        <end position="139"/>
    </location>
</feature>
<feature type="transmembrane region" description="Helical; Name=4" evidence="2">
    <location>
        <begin position="140"/>
        <end position="160"/>
    </location>
</feature>
<feature type="topological domain" description="Extracellular" evidence="2">
    <location>
        <begin position="161"/>
        <end position="196"/>
    </location>
</feature>
<feature type="transmembrane region" description="Helical; Name=5" evidence="2">
    <location>
        <begin position="197"/>
        <end position="216"/>
    </location>
</feature>
<feature type="topological domain" description="Cytoplasmic" evidence="2">
    <location>
        <begin position="217"/>
        <end position="236"/>
    </location>
</feature>
<feature type="transmembrane region" description="Helical; Name=6" evidence="2">
    <location>
        <begin position="237"/>
        <end position="257"/>
    </location>
</feature>
<feature type="topological domain" description="Extracellular" evidence="2">
    <location>
        <begin position="258"/>
        <end position="270"/>
    </location>
</feature>
<feature type="transmembrane region" description="Helical; Name=7" evidence="2">
    <location>
        <begin position="271"/>
        <end position="291"/>
    </location>
</feature>
<feature type="topological domain" description="Cytoplasmic" evidence="2">
    <location>
        <begin position="292"/>
        <end position="309"/>
    </location>
</feature>
<feature type="glycosylation site" description="N-linked (GlcNAc...) asparagine" evidence="2">
    <location>
        <position position="5"/>
    </location>
</feature>
<feature type="disulfide bond" evidence="3">
    <location>
        <begin position="97"/>
        <end position="188"/>
    </location>
</feature>
<feature type="sequence variant" id="VAR_062064" description="In dbSNP:rs35393723.">
    <original>R</original>
    <variation>W</variation>
    <location>
        <position position="233"/>
    </location>
</feature>
<dbReference type="EMBL" id="AB065443">
    <property type="protein sequence ID" value="BAC05709.1"/>
    <property type="molecule type" value="Genomic_DNA"/>
</dbReference>
<dbReference type="EMBL" id="AL606752">
    <property type="status" value="NOT_ANNOTATED_CDS"/>
    <property type="molecule type" value="Genomic_DNA"/>
</dbReference>
<dbReference type="EMBL" id="CH471121">
    <property type="protein sequence ID" value="EAW52783.1"/>
    <property type="molecule type" value="Genomic_DNA"/>
</dbReference>
<dbReference type="EMBL" id="BC137025">
    <property type="protein sequence ID" value="AAI37026.1"/>
    <property type="molecule type" value="mRNA"/>
</dbReference>
<dbReference type="EMBL" id="BC137026">
    <property type="protein sequence ID" value="AAI37027.1"/>
    <property type="molecule type" value="mRNA"/>
</dbReference>
<dbReference type="EMBL" id="BK004290">
    <property type="protein sequence ID" value="DAA04688.1"/>
    <property type="molecule type" value="Genomic_DNA"/>
</dbReference>
<dbReference type="CCDS" id="CCDS30910.1"/>
<dbReference type="RefSeq" id="NP_001004469.1">
    <property type="nucleotide sequence ID" value="NM_001004469.1"/>
</dbReference>
<dbReference type="SMR" id="Q8NHC4"/>
<dbReference type="BioGRID" id="126054">
    <property type="interactions" value="3"/>
</dbReference>
<dbReference type="FunCoup" id="Q8NHC4">
    <property type="interactions" value="453"/>
</dbReference>
<dbReference type="IntAct" id="Q8NHC4">
    <property type="interactions" value="1"/>
</dbReference>
<dbReference type="STRING" id="9606.ENSP00000334441"/>
<dbReference type="GlyCosmos" id="Q8NHC4">
    <property type="glycosylation" value="1 site, No reported glycans"/>
</dbReference>
<dbReference type="GlyGen" id="Q8NHC4">
    <property type="glycosylation" value="1 site"/>
</dbReference>
<dbReference type="BioMuta" id="OR10J5"/>
<dbReference type="DMDM" id="38372836"/>
<dbReference type="PaxDb" id="9606-ENSP00000334441"/>
<dbReference type="Antibodypedia" id="20471">
    <property type="antibodies" value="128 antibodies from 23 providers"/>
</dbReference>
<dbReference type="DNASU" id="127385"/>
<dbReference type="Ensembl" id="ENST00000334857.3">
    <property type="protein sequence ID" value="ENSP00000334441.2"/>
    <property type="gene ID" value="ENSG00000184155.8"/>
</dbReference>
<dbReference type="GeneID" id="127385"/>
<dbReference type="KEGG" id="hsa:127385"/>
<dbReference type="MANE-Select" id="ENST00000334857.3">
    <property type="protein sequence ID" value="ENSP00000334441.2"/>
    <property type="RefSeq nucleotide sequence ID" value="NM_001004469.1"/>
    <property type="RefSeq protein sequence ID" value="NP_001004469.1"/>
</dbReference>
<dbReference type="UCSC" id="uc010piw.2">
    <property type="organism name" value="human"/>
</dbReference>
<dbReference type="AGR" id="HGNC:14993"/>
<dbReference type="CTD" id="127385"/>
<dbReference type="DisGeNET" id="127385"/>
<dbReference type="GeneCards" id="OR10J5"/>
<dbReference type="HGNC" id="HGNC:14993">
    <property type="gene designation" value="OR10J5"/>
</dbReference>
<dbReference type="HPA" id="ENSG00000184155">
    <property type="expression patterns" value="Not detected"/>
</dbReference>
<dbReference type="MIM" id="619546">
    <property type="type" value="gene"/>
</dbReference>
<dbReference type="neXtProt" id="NX_Q8NHC4"/>
<dbReference type="OpenTargets" id="ENSG00000184155"/>
<dbReference type="PharmGKB" id="PA31986"/>
<dbReference type="VEuPathDB" id="HostDB:ENSG00000184155"/>
<dbReference type="eggNOG" id="ENOG502RU27">
    <property type="taxonomic scope" value="Eukaryota"/>
</dbReference>
<dbReference type="GeneTree" id="ENSGT00940000159272"/>
<dbReference type="HOGENOM" id="CLU_012526_1_2_1"/>
<dbReference type="InParanoid" id="Q8NHC4"/>
<dbReference type="OMA" id="SIFGKHQ"/>
<dbReference type="OrthoDB" id="9975554at2759"/>
<dbReference type="PAN-GO" id="Q8NHC4">
    <property type="GO annotations" value="6 GO annotations based on evolutionary models"/>
</dbReference>
<dbReference type="PhylomeDB" id="Q8NHC4"/>
<dbReference type="TreeFam" id="TF337624"/>
<dbReference type="PathwayCommons" id="Q8NHC4"/>
<dbReference type="Reactome" id="R-HSA-381753">
    <property type="pathway name" value="Olfactory Signaling Pathway"/>
</dbReference>
<dbReference type="Reactome" id="R-HSA-9752946">
    <property type="pathway name" value="Expression and translocation of olfactory receptors"/>
</dbReference>
<dbReference type="BioGRID-ORCS" id="127385">
    <property type="hits" value="10 hits in 740 CRISPR screens"/>
</dbReference>
<dbReference type="GeneWiki" id="OR10J5"/>
<dbReference type="GenomeRNAi" id="127385"/>
<dbReference type="Pharos" id="Q8NHC4">
    <property type="development level" value="Tdark"/>
</dbReference>
<dbReference type="PRO" id="PR:Q8NHC4"/>
<dbReference type="Proteomes" id="UP000005640">
    <property type="component" value="Chromosome 1"/>
</dbReference>
<dbReference type="RNAct" id="Q8NHC4">
    <property type="molecule type" value="protein"/>
</dbReference>
<dbReference type="Bgee" id="ENSG00000184155">
    <property type="expression patterns" value="Expressed in male germ line stem cell (sensu Vertebrata) in testis and 2 other cell types or tissues"/>
</dbReference>
<dbReference type="ExpressionAtlas" id="Q8NHC4">
    <property type="expression patterns" value="baseline and differential"/>
</dbReference>
<dbReference type="GO" id="GO:0005886">
    <property type="term" value="C:plasma membrane"/>
    <property type="evidence" value="ECO:0000314"/>
    <property type="project" value="UniProtKB"/>
</dbReference>
<dbReference type="GO" id="GO:0004930">
    <property type="term" value="F:G protein-coupled receptor activity"/>
    <property type="evidence" value="ECO:0007669"/>
    <property type="project" value="UniProtKB-KW"/>
</dbReference>
<dbReference type="GO" id="GO:0004984">
    <property type="term" value="F:olfactory receptor activity"/>
    <property type="evidence" value="ECO:0000314"/>
    <property type="project" value="UniProtKB"/>
</dbReference>
<dbReference type="GO" id="GO:0001525">
    <property type="term" value="P:angiogenesis"/>
    <property type="evidence" value="ECO:0007669"/>
    <property type="project" value="UniProtKB-KW"/>
</dbReference>
<dbReference type="GO" id="GO:0006935">
    <property type="term" value="P:chemotaxis"/>
    <property type="evidence" value="ECO:0000250"/>
    <property type="project" value="UniProtKB"/>
</dbReference>
<dbReference type="GO" id="GO:0050911">
    <property type="term" value="P:detection of chemical stimulus involved in sensory perception of smell"/>
    <property type="evidence" value="ECO:0000318"/>
    <property type="project" value="GO_Central"/>
</dbReference>
<dbReference type="GO" id="GO:0007187">
    <property type="term" value="P:G protein-coupled receptor signaling pathway, coupled to cyclic nucleotide second messenger"/>
    <property type="evidence" value="ECO:0000314"/>
    <property type="project" value="UniProtKB"/>
</dbReference>
<dbReference type="GO" id="GO:0055088">
    <property type="term" value="P:lipid homeostasis"/>
    <property type="evidence" value="ECO:0000315"/>
    <property type="project" value="UniProtKB"/>
</dbReference>
<dbReference type="GO" id="GO:0007517">
    <property type="term" value="P:muscle organ development"/>
    <property type="evidence" value="ECO:0007669"/>
    <property type="project" value="UniProtKB-KW"/>
</dbReference>
<dbReference type="GO" id="GO:0045765">
    <property type="term" value="P:regulation of angiogenesis"/>
    <property type="evidence" value="ECO:0000315"/>
    <property type="project" value="UniProtKB"/>
</dbReference>
<dbReference type="GO" id="GO:0051147">
    <property type="term" value="P:regulation of muscle cell differentiation"/>
    <property type="evidence" value="ECO:0000250"/>
    <property type="project" value="UniProtKB"/>
</dbReference>
<dbReference type="GO" id="GO:0007608">
    <property type="term" value="P:sensory perception of smell"/>
    <property type="evidence" value="ECO:0000314"/>
    <property type="project" value="UniProtKB"/>
</dbReference>
<dbReference type="CDD" id="cd15225">
    <property type="entry name" value="7tmA_OR10A-like"/>
    <property type="match status" value="1"/>
</dbReference>
<dbReference type="FunFam" id="1.10.1220.70:FF:000001">
    <property type="entry name" value="Olfactory receptor"/>
    <property type="match status" value="1"/>
</dbReference>
<dbReference type="FunFam" id="1.20.1070.10:FF:000001">
    <property type="entry name" value="Olfactory receptor"/>
    <property type="match status" value="1"/>
</dbReference>
<dbReference type="Gene3D" id="1.20.1070.10">
    <property type="entry name" value="Rhodopsin 7-helix transmembrane proteins"/>
    <property type="match status" value="1"/>
</dbReference>
<dbReference type="InterPro" id="IPR000276">
    <property type="entry name" value="GPCR_Rhodpsn"/>
</dbReference>
<dbReference type="InterPro" id="IPR017452">
    <property type="entry name" value="GPCR_Rhodpsn_7TM"/>
</dbReference>
<dbReference type="InterPro" id="IPR000725">
    <property type="entry name" value="Olfact_rcpt"/>
</dbReference>
<dbReference type="PANTHER" id="PTHR26453">
    <property type="entry name" value="OLFACTORY RECEPTOR"/>
    <property type="match status" value="1"/>
</dbReference>
<dbReference type="Pfam" id="PF13853">
    <property type="entry name" value="7tm_4"/>
    <property type="match status" value="1"/>
</dbReference>
<dbReference type="PRINTS" id="PR00237">
    <property type="entry name" value="GPCRRHODOPSN"/>
</dbReference>
<dbReference type="PRINTS" id="PR00245">
    <property type="entry name" value="OLFACTORYR"/>
</dbReference>
<dbReference type="SUPFAM" id="SSF81321">
    <property type="entry name" value="Family A G protein-coupled receptor-like"/>
    <property type="match status" value="1"/>
</dbReference>
<dbReference type="PROSITE" id="PS50262">
    <property type="entry name" value="G_PROTEIN_RECEP_F1_2"/>
    <property type="match status" value="1"/>
</dbReference>
<organism>
    <name type="scientific">Homo sapiens</name>
    <name type="common">Human</name>
    <dbReference type="NCBI Taxonomy" id="9606"/>
    <lineage>
        <taxon>Eukaryota</taxon>
        <taxon>Metazoa</taxon>
        <taxon>Chordata</taxon>
        <taxon>Craniata</taxon>
        <taxon>Vertebrata</taxon>
        <taxon>Euteleostomi</taxon>
        <taxon>Mammalia</taxon>
        <taxon>Eutheria</taxon>
        <taxon>Euarchontoglires</taxon>
        <taxon>Primates</taxon>
        <taxon>Haplorrhini</taxon>
        <taxon>Catarrhini</taxon>
        <taxon>Hominidae</taxon>
        <taxon>Homo</taxon>
    </lineage>
</organism>
<comment type="function">
    <text evidence="1 4 5">Olfactory receptor. Activated by the synthetic floral odorant, lyral, and by alpha-cedrene, a sesquiterpene constituent of cedarwood oil. Its activation increases intracellular Ca(2+) (PubMed:25791473, PubMed:28842679). Acts as a key regulator of myogenesis through its actions on cell migration and adhesion by activating the Ca(2+)-dependent AKT signal transduction pathway (By similarity). Also acts as a regulator of angiogenesis (PubMed:25791473). Moreover, plays a role in the regulation of lipid accumulation in hepatocytes via the cAMP-PKA pathway (PubMed:28842679). May be involved in sperm chemotaxis and motility (By similarity).</text>
</comment>
<comment type="subcellular location">
    <subcellularLocation>
        <location evidence="5">Cell membrane</location>
        <topology evidence="2">Multi-pass membrane protein</topology>
    </subcellularLocation>
</comment>
<comment type="tissue specificity">
    <text evidence="4">Expressed in both the aorta, the coronary artery and umbilical vein endothelial cells (HUVECs) (at protein level).</text>
</comment>
<comment type="similarity">
    <text evidence="3">Belongs to the G-protein coupled receptor 1 family.</text>
</comment>
<comment type="online information" name="Human Olfactory Receptor Data Exploratorium (HORDE)">
    <link uri="http://genome.weizmann.ac.il/horde/card/index/symbol:OR10J5"/>
</comment>
<sequence>MKRKNFTEVSEFIFLGFSSFGKHQITLFVVFLTVYILTLVANIIIVTIICIDHHLHTPMYFFLSMLASSETVYTLVIVPRMLLSLIFHNQPISLAGCATQMFFFVILATNNCFLLTAMGYDRYVAICRPLRYTVIMSKGLCAQLVCGSFGIGLTMAVLHVTAMFNLPFCGTVVDHFFCDIYPVMKLSCIDTTINEIINYGVSSFVIFVPIGLIFISYVLVISSILQIASAEGRKKTFATCVSHLTVVIVHCGCASIAYLKPKSESSIEKDLVLSVTYTIITPLLNPVVYSLRNKEVKDALCRVVGRNIS</sequence>
<accession>Q8NHC4</accession>
<accession>B9EH35</accession>
<accession>Q6IFH2</accession>
<keyword id="KW-0037">Angiogenesis</keyword>
<keyword id="KW-1003">Cell membrane</keyword>
<keyword id="KW-1015">Disulfide bond</keyword>
<keyword id="KW-0297">G-protein coupled receptor</keyword>
<keyword id="KW-0325">Glycoprotein</keyword>
<keyword id="KW-0472">Membrane</keyword>
<keyword id="KW-0517">Myogenesis</keyword>
<keyword id="KW-0552">Olfaction</keyword>
<keyword id="KW-0675">Receptor</keyword>
<keyword id="KW-1185">Reference proteome</keyword>
<keyword id="KW-0716">Sensory transduction</keyword>
<keyword id="KW-0807">Transducer</keyword>
<keyword id="KW-0812">Transmembrane</keyword>
<keyword id="KW-1133">Transmembrane helix</keyword>